<gene>
    <name evidence="1" type="primary">cheB2</name>
    <name type="ordered locus">Shewmr7_1886</name>
</gene>
<feature type="chain" id="PRO_0000264324" description="Protein-glutamate methylesterase/protein-glutamine glutaminase 2">
    <location>
        <begin position="1"/>
        <end position="351"/>
    </location>
</feature>
<feature type="domain" description="Response regulatory" evidence="1">
    <location>
        <begin position="4"/>
        <end position="121"/>
    </location>
</feature>
<feature type="domain" description="CheB-type methylesterase" evidence="1">
    <location>
        <begin position="156"/>
        <end position="348"/>
    </location>
</feature>
<feature type="active site" evidence="1">
    <location>
        <position position="168"/>
    </location>
</feature>
<feature type="active site" evidence="1">
    <location>
        <position position="194"/>
    </location>
</feature>
<feature type="active site" evidence="1">
    <location>
        <position position="290"/>
    </location>
</feature>
<feature type="modified residue" description="4-aspartylphosphate" evidence="1">
    <location>
        <position position="55"/>
    </location>
</feature>
<protein>
    <recommendedName>
        <fullName evidence="1">Protein-glutamate methylesterase/protein-glutamine glutaminase 2</fullName>
        <ecNumber evidence="1">3.1.1.61</ecNumber>
        <ecNumber evidence="1">3.5.1.44</ecNumber>
    </recommendedName>
</protein>
<proteinExistence type="inferred from homology"/>
<keyword id="KW-0145">Chemotaxis</keyword>
<keyword id="KW-0963">Cytoplasm</keyword>
<keyword id="KW-0378">Hydrolase</keyword>
<keyword id="KW-0597">Phosphoprotein</keyword>
<reference key="1">
    <citation type="submission" date="2006-08" db="EMBL/GenBank/DDBJ databases">
        <title>Complete sequence of chromosome 1 of Shewanella sp. MR-7.</title>
        <authorList>
            <person name="Copeland A."/>
            <person name="Lucas S."/>
            <person name="Lapidus A."/>
            <person name="Barry K."/>
            <person name="Detter J.C."/>
            <person name="Glavina del Rio T."/>
            <person name="Hammon N."/>
            <person name="Israni S."/>
            <person name="Dalin E."/>
            <person name="Tice H."/>
            <person name="Pitluck S."/>
            <person name="Kiss H."/>
            <person name="Brettin T."/>
            <person name="Bruce D."/>
            <person name="Han C."/>
            <person name="Tapia R."/>
            <person name="Gilna P."/>
            <person name="Schmutz J."/>
            <person name="Larimer F."/>
            <person name="Land M."/>
            <person name="Hauser L."/>
            <person name="Kyrpides N."/>
            <person name="Mikhailova N."/>
            <person name="Nealson K."/>
            <person name="Konstantinidis K."/>
            <person name="Klappenbach J."/>
            <person name="Tiedje J."/>
            <person name="Richardson P."/>
        </authorList>
    </citation>
    <scope>NUCLEOTIDE SEQUENCE [LARGE SCALE GENOMIC DNA]</scope>
    <source>
        <strain>MR-7</strain>
    </source>
</reference>
<sequence length="351" mass="37905">MTIKVLVVDDSALIRNLLGKMIEADSELSLVGMAADAYMAKDMVNQHRPDVITLDIEMPKVDGLTFLDRLMKARPTAVVMISSLTEEGADATFNALALGAVDFIPKPKLDSPQDFNEYQDLILEKIKSAAHAKLKTQRAAPAVVVQPSHKPALSNRVINTQLVAIGASTGGTEAILSLLQQFPAVMPPIVITQHMPPGFTRTFAERLNKLTRLNVKQAEDGERLLPCYVYIAPGDQHLEVIKVGGSFKTRLTQGDKVSGHRPSVDVLFNSVAECAGANTTAAILTGMGKDGADGMALIDEQGGKTFAQGEQSCVVFGMPREAIKRGVIHHVVELPQLADKMLNYLASLKRD</sequence>
<name>CHEB2_SHESR</name>
<comment type="function">
    <text evidence="1">Involved in chemotaxis. Part of a chemotaxis signal transduction system that modulates chemotaxis in response to various stimuli. Catalyzes the demethylation of specific methylglutamate residues introduced into the chemoreceptors (methyl-accepting chemotaxis proteins or MCP) by CheR. Also mediates the irreversible deamidation of specific glutamine residues to glutamic acid.</text>
</comment>
<comment type="catalytic activity">
    <reaction evidence="1">
        <text>[protein]-L-glutamate 5-O-methyl ester + H2O = L-glutamyl-[protein] + methanol + H(+)</text>
        <dbReference type="Rhea" id="RHEA:23236"/>
        <dbReference type="Rhea" id="RHEA-COMP:10208"/>
        <dbReference type="Rhea" id="RHEA-COMP:10311"/>
        <dbReference type="ChEBI" id="CHEBI:15377"/>
        <dbReference type="ChEBI" id="CHEBI:15378"/>
        <dbReference type="ChEBI" id="CHEBI:17790"/>
        <dbReference type="ChEBI" id="CHEBI:29973"/>
        <dbReference type="ChEBI" id="CHEBI:82795"/>
        <dbReference type="EC" id="3.1.1.61"/>
    </reaction>
</comment>
<comment type="catalytic activity">
    <reaction evidence="1">
        <text>L-glutaminyl-[protein] + H2O = L-glutamyl-[protein] + NH4(+)</text>
        <dbReference type="Rhea" id="RHEA:16441"/>
        <dbReference type="Rhea" id="RHEA-COMP:10207"/>
        <dbReference type="Rhea" id="RHEA-COMP:10208"/>
        <dbReference type="ChEBI" id="CHEBI:15377"/>
        <dbReference type="ChEBI" id="CHEBI:28938"/>
        <dbReference type="ChEBI" id="CHEBI:29973"/>
        <dbReference type="ChEBI" id="CHEBI:30011"/>
        <dbReference type="EC" id="3.5.1.44"/>
    </reaction>
</comment>
<comment type="subcellular location">
    <subcellularLocation>
        <location evidence="1">Cytoplasm</location>
    </subcellularLocation>
</comment>
<comment type="domain">
    <text evidence="1">Contains a C-terminal catalytic domain, and an N-terminal region which modulates catalytic activity.</text>
</comment>
<comment type="PTM">
    <text evidence="1">Phosphorylated by CheA. Phosphorylation of the N-terminal regulatory domain activates the methylesterase activity.</text>
</comment>
<comment type="similarity">
    <text evidence="1">Belongs to the CheB family.</text>
</comment>
<evidence type="ECO:0000255" key="1">
    <source>
        <dbReference type="HAMAP-Rule" id="MF_00099"/>
    </source>
</evidence>
<organism>
    <name type="scientific">Shewanella sp. (strain MR-7)</name>
    <dbReference type="NCBI Taxonomy" id="60481"/>
    <lineage>
        <taxon>Bacteria</taxon>
        <taxon>Pseudomonadati</taxon>
        <taxon>Pseudomonadota</taxon>
        <taxon>Gammaproteobacteria</taxon>
        <taxon>Alteromonadales</taxon>
        <taxon>Shewanellaceae</taxon>
        <taxon>Shewanella</taxon>
    </lineage>
</organism>
<accession>Q0HVI0</accession>
<dbReference type="EC" id="3.1.1.61" evidence="1"/>
<dbReference type="EC" id="3.5.1.44" evidence="1"/>
<dbReference type="EMBL" id="CP000444">
    <property type="protein sequence ID" value="ABI42875.1"/>
    <property type="molecule type" value="Genomic_DNA"/>
</dbReference>
<dbReference type="SMR" id="Q0HVI0"/>
<dbReference type="KEGG" id="shm:Shewmr7_1886"/>
<dbReference type="HOGENOM" id="CLU_000445_51_0_6"/>
<dbReference type="GO" id="GO:0005737">
    <property type="term" value="C:cytoplasm"/>
    <property type="evidence" value="ECO:0007669"/>
    <property type="project" value="UniProtKB-SubCell"/>
</dbReference>
<dbReference type="GO" id="GO:0000156">
    <property type="term" value="F:phosphorelay response regulator activity"/>
    <property type="evidence" value="ECO:0007669"/>
    <property type="project" value="InterPro"/>
</dbReference>
<dbReference type="GO" id="GO:0008984">
    <property type="term" value="F:protein-glutamate methylesterase activity"/>
    <property type="evidence" value="ECO:0007669"/>
    <property type="project" value="UniProtKB-UniRule"/>
</dbReference>
<dbReference type="GO" id="GO:0050568">
    <property type="term" value="F:protein-glutamine glutaminase activity"/>
    <property type="evidence" value="ECO:0007669"/>
    <property type="project" value="UniProtKB-UniRule"/>
</dbReference>
<dbReference type="GO" id="GO:0006935">
    <property type="term" value="P:chemotaxis"/>
    <property type="evidence" value="ECO:0007669"/>
    <property type="project" value="UniProtKB-UniRule"/>
</dbReference>
<dbReference type="CDD" id="cd16432">
    <property type="entry name" value="CheB_Rec"/>
    <property type="match status" value="1"/>
</dbReference>
<dbReference type="CDD" id="cd17541">
    <property type="entry name" value="REC_CheB-like"/>
    <property type="match status" value="1"/>
</dbReference>
<dbReference type="Gene3D" id="3.40.50.2300">
    <property type="match status" value="1"/>
</dbReference>
<dbReference type="Gene3D" id="3.40.50.180">
    <property type="entry name" value="Methylesterase CheB, C-terminal domain"/>
    <property type="match status" value="1"/>
</dbReference>
<dbReference type="HAMAP" id="MF_00099">
    <property type="entry name" value="CheB_chemtxs"/>
    <property type="match status" value="1"/>
</dbReference>
<dbReference type="InterPro" id="IPR008248">
    <property type="entry name" value="CheB-like"/>
</dbReference>
<dbReference type="InterPro" id="IPR035909">
    <property type="entry name" value="CheB_C"/>
</dbReference>
<dbReference type="InterPro" id="IPR011006">
    <property type="entry name" value="CheY-like_superfamily"/>
</dbReference>
<dbReference type="InterPro" id="IPR000673">
    <property type="entry name" value="Sig_transdc_resp-reg_Me-estase"/>
</dbReference>
<dbReference type="InterPro" id="IPR001789">
    <property type="entry name" value="Sig_transdc_resp-reg_receiver"/>
</dbReference>
<dbReference type="NCBIfam" id="NF001965">
    <property type="entry name" value="PRK00742.1"/>
    <property type="match status" value="1"/>
</dbReference>
<dbReference type="NCBIfam" id="NF009206">
    <property type="entry name" value="PRK12555.1"/>
    <property type="match status" value="1"/>
</dbReference>
<dbReference type="PANTHER" id="PTHR42872">
    <property type="entry name" value="PROTEIN-GLUTAMATE METHYLESTERASE/PROTEIN-GLUTAMINE GLUTAMINASE"/>
    <property type="match status" value="1"/>
</dbReference>
<dbReference type="PANTHER" id="PTHR42872:SF6">
    <property type="entry name" value="PROTEIN-GLUTAMATE METHYLESTERASE_PROTEIN-GLUTAMINE GLUTAMINASE"/>
    <property type="match status" value="1"/>
</dbReference>
<dbReference type="Pfam" id="PF01339">
    <property type="entry name" value="CheB_methylest"/>
    <property type="match status" value="1"/>
</dbReference>
<dbReference type="Pfam" id="PF00072">
    <property type="entry name" value="Response_reg"/>
    <property type="match status" value="1"/>
</dbReference>
<dbReference type="PIRSF" id="PIRSF000876">
    <property type="entry name" value="RR_chemtxs_CheB"/>
    <property type="match status" value="1"/>
</dbReference>
<dbReference type="SMART" id="SM00448">
    <property type="entry name" value="REC"/>
    <property type="match status" value="1"/>
</dbReference>
<dbReference type="SUPFAM" id="SSF52172">
    <property type="entry name" value="CheY-like"/>
    <property type="match status" value="1"/>
</dbReference>
<dbReference type="SUPFAM" id="SSF52738">
    <property type="entry name" value="Methylesterase CheB, C-terminal domain"/>
    <property type="match status" value="1"/>
</dbReference>
<dbReference type="PROSITE" id="PS50122">
    <property type="entry name" value="CHEB"/>
    <property type="match status" value="1"/>
</dbReference>
<dbReference type="PROSITE" id="PS50110">
    <property type="entry name" value="RESPONSE_REGULATORY"/>
    <property type="match status" value="1"/>
</dbReference>